<feature type="chain" id="PRO_1000101074" description="Large ribosomal subunit protein bL36">
    <location>
        <begin position="1"/>
        <end position="41"/>
    </location>
</feature>
<keyword id="KW-1185">Reference proteome</keyword>
<keyword id="KW-0687">Ribonucleoprotein</keyword>
<keyword id="KW-0689">Ribosomal protein</keyword>
<comment type="similarity">
    <text evidence="1">Belongs to the bacterial ribosomal protein bL36 family.</text>
</comment>
<name>RL36_STRMK</name>
<organism>
    <name type="scientific">Stenotrophomonas maltophilia (strain K279a)</name>
    <dbReference type="NCBI Taxonomy" id="522373"/>
    <lineage>
        <taxon>Bacteria</taxon>
        <taxon>Pseudomonadati</taxon>
        <taxon>Pseudomonadota</taxon>
        <taxon>Gammaproteobacteria</taxon>
        <taxon>Lysobacterales</taxon>
        <taxon>Lysobacteraceae</taxon>
        <taxon>Stenotrophomonas</taxon>
        <taxon>Stenotrophomonas maltophilia group</taxon>
    </lineage>
</organism>
<reference key="1">
    <citation type="journal article" date="2008" name="Genome Biol.">
        <title>The complete genome, comparative and functional analysis of Stenotrophomonas maltophilia reveals an organism heavily shielded by drug resistance determinants.</title>
        <authorList>
            <person name="Crossman L.C."/>
            <person name="Gould V.C."/>
            <person name="Dow J.M."/>
            <person name="Vernikos G.S."/>
            <person name="Okazaki A."/>
            <person name="Sebaihia M."/>
            <person name="Saunders D."/>
            <person name="Arrowsmith C."/>
            <person name="Carver T."/>
            <person name="Peters N."/>
            <person name="Adlem E."/>
            <person name="Kerhornou A."/>
            <person name="Lord A."/>
            <person name="Murphy L."/>
            <person name="Seeger K."/>
            <person name="Squares R."/>
            <person name="Rutter S."/>
            <person name="Quail M.A."/>
            <person name="Rajandream M.A."/>
            <person name="Harris D."/>
            <person name="Churcher C."/>
            <person name="Bentley S.D."/>
            <person name="Parkhill J."/>
            <person name="Thomson N.R."/>
            <person name="Avison M.B."/>
        </authorList>
    </citation>
    <scope>NUCLEOTIDE SEQUENCE [LARGE SCALE GENOMIC DNA]</scope>
    <source>
        <strain>K279a</strain>
    </source>
</reference>
<dbReference type="EMBL" id="AM743169">
    <property type="protein sequence ID" value="CAQ45549.1"/>
    <property type="molecule type" value="Genomic_DNA"/>
</dbReference>
<dbReference type="SMR" id="B2FNP3"/>
<dbReference type="EnsemblBacteria" id="CAQ45549">
    <property type="protein sequence ID" value="CAQ45549"/>
    <property type="gene ID" value="Smlt2041"/>
</dbReference>
<dbReference type="KEGG" id="sml:Smlt2041"/>
<dbReference type="eggNOG" id="COG0257">
    <property type="taxonomic scope" value="Bacteria"/>
</dbReference>
<dbReference type="HOGENOM" id="CLU_135723_3_3_6"/>
<dbReference type="Proteomes" id="UP000008840">
    <property type="component" value="Chromosome"/>
</dbReference>
<dbReference type="GO" id="GO:1990904">
    <property type="term" value="C:ribonucleoprotein complex"/>
    <property type="evidence" value="ECO:0007669"/>
    <property type="project" value="UniProtKB-KW"/>
</dbReference>
<dbReference type="GO" id="GO:0005840">
    <property type="term" value="C:ribosome"/>
    <property type="evidence" value="ECO:0007669"/>
    <property type="project" value="UniProtKB-KW"/>
</dbReference>
<dbReference type="GO" id="GO:0003735">
    <property type="term" value="F:structural constituent of ribosome"/>
    <property type="evidence" value="ECO:0007669"/>
    <property type="project" value="InterPro"/>
</dbReference>
<dbReference type="GO" id="GO:0006412">
    <property type="term" value="P:translation"/>
    <property type="evidence" value="ECO:0007669"/>
    <property type="project" value="UniProtKB-UniRule"/>
</dbReference>
<dbReference type="HAMAP" id="MF_00251">
    <property type="entry name" value="Ribosomal_bL36"/>
    <property type="match status" value="1"/>
</dbReference>
<dbReference type="InterPro" id="IPR000473">
    <property type="entry name" value="Ribosomal_bL36"/>
</dbReference>
<dbReference type="InterPro" id="IPR035977">
    <property type="entry name" value="Ribosomal_bL36_sp"/>
</dbReference>
<dbReference type="InterPro" id="IPR047621">
    <property type="entry name" value="Ribosomal_L36_bact"/>
</dbReference>
<dbReference type="NCBIfam" id="NF002021">
    <property type="entry name" value="PRK00831.1"/>
    <property type="match status" value="1"/>
</dbReference>
<dbReference type="NCBIfam" id="TIGR01022">
    <property type="entry name" value="rpmJ_bact"/>
    <property type="match status" value="1"/>
</dbReference>
<dbReference type="PANTHER" id="PTHR47781">
    <property type="entry name" value="50S RIBOSOMAL PROTEIN L36 2"/>
    <property type="match status" value="1"/>
</dbReference>
<dbReference type="PANTHER" id="PTHR47781:SF1">
    <property type="entry name" value="LARGE RIBOSOMAL SUBUNIT PROTEIN BL36B"/>
    <property type="match status" value="1"/>
</dbReference>
<dbReference type="Pfam" id="PF00444">
    <property type="entry name" value="Ribosomal_L36"/>
    <property type="match status" value="1"/>
</dbReference>
<dbReference type="SUPFAM" id="SSF57840">
    <property type="entry name" value="Ribosomal protein L36"/>
    <property type="match status" value="1"/>
</dbReference>
<dbReference type="PROSITE" id="PS00828">
    <property type="entry name" value="RIBOSOMAL_L36"/>
    <property type="match status" value="1"/>
</dbReference>
<evidence type="ECO:0000255" key="1">
    <source>
        <dbReference type="HAMAP-Rule" id="MF_00251"/>
    </source>
</evidence>
<evidence type="ECO:0000305" key="2"/>
<proteinExistence type="inferred from homology"/>
<sequence length="41" mass="4856">MKVLSSLKSAKARHRDCKVVRRRGKIFVICKSNPRFKARQR</sequence>
<gene>
    <name evidence="1" type="primary">rpmJ</name>
    <name type="ordered locus">Smlt2041</name>
</gene>
<accession>B2FNP3</accession>
<protein>
    <recommendedName>
        <fullName evidence="1">Large ribosomal subunit protein bL36</fullName>
    </recommendedName>
    <alternativeName>
        <fullName evidence="2">50S ribosomal protein L36</fullName>
    </alternativeName>
</protein>